<feature type="initiator methionine" description="Removed; partial">
    <location>
        <position position="1"/>
    </location>
</feature>
<feature type="chain" id="PRO_0000099576" description="Protein OPG081">
    <location>
        <begin position="2"/>
        <end position="79"/>
    </location>
</feature>
<feature type="topological domain" description="Intravirion" evidence="1">
    <location>
        <begin position="2"/>
        <end position="8"/>
    </location>
</feature>
<feature type="transmembrane region" description="Helical" evidence="1">
    <location>
        <begin position="9"/>
        <end position="29"/>
    </location>
</feature>
<feature type="topological domain" description="Virion surface" evidence="1">
    <location>
        <begin position="30"/>
        <end position="47"/>
    </location>
</feature>
<feature type="transmembrane region" description="Helical" evidence="1">
    <location>
        <begin position="48"/>
        <end position="68"/>
    </location>
</feature>
<feature type="topological domain" description="Intravirion" evidence="1">
    <location>
        <begin position="69"/>
        <end position="79"/>
    </location>
</feature>
<organism>
    <name type="scientific">Vaccinia virus (strain Western Reserve)</name>
    <name type="common">VACV</name>
    <name type="synonym">Vaccinia virus (strain WR)</name>
    <dbReference type="NCBI Taxonomy" id="10254"/>
    <lineage>
        <taxon>Viruses</taxon>
        <taxon>Varidnaviria</taxon>
        <taxon>Bamfordvirae</taxon>
        <taxon>Nucleocytoviricota</taxon>
        <taxon>Pokkesviricetes</taxon>
        <taxon>Chitovirales</taxon>
        <taxon>Poxviridae</taxon>
        <taxon>Chordopoxvirinae</taxon>
        <taxon>Orthopoxvirus</taxon>
        <taxon>Vaccinia virus</taxon>
    </lineage>
</organism>
<keyword id="KW-0903">Direct protein sequencing</keyword>
<keyword id="KW-0426">Late protein</keyword>
<keyword id="KW-0472">Membrane</keyword>
<keyword id="KW-1185">Reference proteome</keyword>
<keyword id="KW-0812">Transmembrane</keyword>
<keyword id="KW-1133">Transmembrane helix</keyword>
<keyword id="KW-0261">Viral envelope protein</keyword>
<keyword id="KW-0946">Virion</keyword>
<evidence type="ECO:0000255" key="1"/>
<evidence type="ECO:0000269" key="2">
    <source>
    </source>
</evidence>
<evidence type="ECO:0000269" key="3">
    <source>
    </source>
</evidence>
<evidence type="ECO:0000269" key="4">
    <source>
    </source>
</evidence>
<evidence type="ECO:0000305" key="5"/>
<name>PG081_VACCW</name>
<reference key="1">
    <citation type="journal article" date="1988" name="J. Virol.">
        <title>Sequence and transcriptional analysis of the vaccinia virus HindIII I fragment.</title>
        <authorList>
            <person name="Schmitt J.F.C."/>
            <person name="Stunnenberg H.G."/>
        </authorList>
    </citation>
    <scope>NUCLEOTIDE SEQUENCE [GENOMIC DNA]</scope>
</reference>
<reference key="2">
    <citation type="submission" date="2003-02" db="EMBL/GenBank/DDBJ databases">
        <title>Sequencing of the coding region of Vaccinia-WR to an average 9-fold redundancy and an error rate of 0.16/10kb.</title>
        <authorList>
            <person name="Esposito J.J."/>
            <person name="Frace A.M."/>
            <person name="Sammons S.A."/>
            <person name="Olsen-Rasmussen M."/>
            <person name="Osborne J."/>
            <person name="Wohlhueter R."/>
        </authorList>
    </citation>
    <scope>NUCLEOTIDE SEQUENCE [LARGE SCALE GENOMIC DNA]</scope>
</reference>
<reference key="3">
    <citation type="journal article" date="1994" name="Virology">
        <title>N-terminal amino acid sequences of vaccinia virus structural proteins.</title>
        <authorList>
            <person name="Takahashi T."/>
            <person name="Oie M."/>
            <person name="Ichihashi Y."/>
        </authorList>
    </citation>
    <scope>PROTEIN SEQUENCE OF 1-11</scope>
    <source>
        <strain>IHD-J</strain>
    </source>
</reference>
<reference key="4">
    <citation type="journal article" date="2008" name="J. Virol.">
        <title>Vaccinia virus encodes I5, a small hydrophobic virion membrane protein that enhances replication and virulence in mice.</title>
        <authorList>
            <person name="Sood C.L."/>
            <person name="Ward J.M."/>
            <person name="Moss B."/>
        </authorList>
    </citation>
    <scope>SUBCELLULAR LOCATION</scope>
    <scope>INDUCTION</scope>
</reference>
<reference key="5">
    <citation type="journal article" date="2008" name="Virol. J.">
        <title>Functional characterization of the vaccinia virus I5 protein.</title>
        <authorList>
            <person name="Unger B."/>
            <person name="Nichols R.J."/>
            <person name="Stanitsa E.S."/>
            <person name="Traktman P."/>
        </authorList>
    </citation>
    <scope>SUBCELLULAR LOCATION</scope>
    <scope>TOPOLOGY</scope>
</reference>
<reference key="6">
    <citation type="journal article" date="2015" name="J. Virol.">
        <title>Deciphering poxvirus gene expression by RNA sequencing and ribosome profiling.</title>
        <authorList>
            <person name="Yang Z."/>
            <person name="Cao S."/>
            <person name="Martens C.A."/>
            <person name="Porcella S.F."/>
            <person name="Xie Z."/>
            <person name="Ma M."/>
            <person name="Shen B."/>
            <person name="Moss B."/>
        </authorList>
    </citation>
    <scope>INDUCTION</scope>
</reference>
<organismHost>
    <name type="scientific">Bos taurus</name>
    <name type="common">Bovine</name>
    <dbReference type="NCBI Taxonomy" id="9913"/>
</organismHost>
<dbReference type="EMBL" id="J03399">
    <property type="protein sequence ID" value="AAB59807.1"/>
    <property type="molecule type" value="Genomic_DNA"/>
</dbReference>
<dbReference type="EMBL" id="AY243312">
    <property type="protein sequence ID" value="AAO89353.1"/>
    <property type="molecule type" value="Genomic_DNA"/>
</dbReference>
<dbReference type="PIR" id="E29889">
    <property type="entry name" value="WZVZI5"/>
</dbReference>
<dbReference type="RefSeq" id="YP_232956.1">
    <property type="nucleotide sequence ID" value="NC_006998.1"/>
</dbReference>
<dbReference type="DNASU" id="3707607"/>
<dbReference type="GeneID" id="3707607"/>
<dbReference type="KEGG" id="vg:3707607"/>
<dbReference type="Proteomes" id="UP000000344">
    <property type="component" value="Genome"/>
</dbReference>
<dbReference type="GO" id="GO:0016020">
    <property type="term" value="C:membrane"/>
    <property type="evidence" value="ECO:0007669"/>
    <property type="project" value="UniProtKB-KW"/>
</dbReference>
<dbReference type="GO" id="GO:0019031">
    <property type="term" value="C:viral envelope"/>
    <property type="evidence" value="ECO:0007669"/>
    <property type="project" value="UniProtKB-KW"/>
</dbReference>
<dbReference type="GO" id="GO:0055036">
    <property type="term" value="C:virion membrane"/>
    <property type="evidence" value="ECO:0007669"/>
    <property type="project" value="UniProtKB-SubCell"/>
</dbReference>
<dbReference type="InterPro" id="IPR006803">
    <property type="entry name" value="Poxvirus_I5"/>
</dbReference>
<dbReference type="Pfam" id="PF04713">
    <property type="entry name" value="Pox_I5"/>
    <property type="match status" value="1"/>
</dbReference>
<dbReference type="PIRSF" id="PIRSF003768">
    <property type="entry name" value="VAC_I5L"/>
    <property type="match status" value="1"/>
</dbReference>
<proteinExistence type="evidence at protein level"/>
<comment type="function">
    <text>Envelope protein.</text>
</comment>
<comment type="subcellular location">
    <subcellularLocation>
        <location evidence="2 3">Virion membrane</location>
        <topology evidence="2 3">Multi-pass membrane protein</topology>
    </subcellularLocation>
    <text>Probably localizes to the membrane of mature virions (MV).</text>
</comment>
<comment type="induction">
    <text evidence="2 4">Expressed in the intermediate phase of the viral replicative cycle.</text>
</comment>
<comment type="similarity">
    <text evidence="5">Belongs to the orthopoxvirus OPG081 family.</text>
</comment>
<protein>
    <recommendedName>
        <fullName>Protein OPG081</fullName>
    </recommendedName>
    <alternativeName>
        <fullName>Protein I5</fullName>
    </alternativeName>
    <alternativeName>
        <fullName>Protein VP13K</fullName>
    </alternativeName>
</protein>
<sequence length="79" mass="8744">MVDAITVLTAIGITVLMLLMVISGAALIVKELNPNDIFTMQSLKFNRAVTIFKYIGLFIYIPGTIILYATYVKSLLMKS</sequence>
<accession>P12924</accession>
<accession>Q76ZU8</accession>
<gene>
    <name type="primary">OPG081</name>
    <name type="ordered locus">VACWR074</name>
    <name type="ORF">I5L</name>
</gene>